<name>RS20_DEHM1</name>
<proteinExistence type="inferred from homology"/>
<keyword id="KW-0687">Ribonucleoprotein</keyword>
<keyword id="KW-0689">Ribosomal protein</keyword>
<keyword id="KW-0694">RNA-binding</keyword>
<keyword id="KW-0699">rRNA-binding</keyword>
<gene>
    <name evidence="1" type="primary">rpsT</name>
    <name type="ordered locus">DET1639</name>
</gene>
<dbReference type="EMBL" id="CP000027">
    <property type="protein sequence ID" value="AAW39196.1"/>
    <property type="molecule type" value="Genomic_DNA"/>
</dbReference>
<dbReference type="RefSeq" id="WP_010937308.1">
    <property type="nucleotide sequence ID" value="NC_002936.3"/>
</dbReference>
<dbReference type="SMR" id="Q3Z617"/>
<dbReference type="FunCoup" id="Q3Z617">
    <property type="interactions" value="266"/>
</dbReference>
<dbReference type="STRING" id="243164.DET1639"/>
<dbReference type="GeneID" id="3229154"/>
<dbReference type="KEGG" id="det:DET1639"/>
<dbReference type="eggNOG" id="COG0268">
    <property type="taxonomic scope" value="Bacteria"/>
</dbReference>
<dbReference type="HOGENOM" id="CLU_160655_3_1_0"/>
<dbReference type="InParanoid" id="Q3Z617"/>
<dbReference type="Proteomes" id="UP000008289">
    <property type="component" value="Chromosome"/>
</dbReference>
<dbReference type="GO" id="GO:0005829">
    <property type="term" value="C:cytosol"/>
    <property type="evidence" value="ECO:0007669"/>
    <property type="project" value="TreeGrafter"/>
</dbReference>
<dbReference type="GO" id="GO:0015935">
    <property type="term" value="C:small ribosomal subunit"/>
    <property type="evidence" value="ECO:0007669"/>
    <property type="project" value="TreeGrafter"/>
</dbReference>
<dbReference type="GO" id="GO:0070181">
    <property type="term" value="F:small ribosomal subunit rRNA binding"/>
    <property type="evidence" value="ECO:0007669"/>
    <property type="project" value="TreeGrafter"/>
</dbReference>
<dbReference type="GO" id="GO:0003735">
    <property type="term" value="F:structural constituent of ribosome"/>
    <property type="evidence" value="ECO:0007669"/>
    <property type="project" value="InterPro"/>
</dbReference>
<dbReference type="GO" id="GO:0006412">
    <property type="term" value="P:translation"/>
    <property type="evidence" value="ECO:0007669"/>
    <property type="project" value="UniProtKB-UniRule"/>
</dbReference>
<dbReference type="Gene3D" id="1.20.58.110">
    <property type="entry name" value="Ribosomal protein S20"/>
    <property type="match status" value="1"/>
</dbReference>
<dbReference type="HAMAP" id="MF_00500">
    <property type="entry name" value="Ribosomal_bS20"/>
    <property type="match status" value="1"/>
</dbReference>
<dbReference type="InterPro" id="IPR002583">
    <property type="entry name" value="Ribosomal_bS20"/>
</dbReference>
<dbReference type="InterPro" id="IPR036510">
    <property type="entry name" value="Ribosomal_bS20_sf"/>
</dbReference>
<dbReference type="NCBIfam" id="TIGR00029">
    <property type="entry name" value="S20"/>
    <property type="match status" value="1"/>
</dbReference>
<dbReference type="PANTHER" id="PTHR33398">
    <property type="entry name" value="30S RIBOSOMAL PROTEIN S20"/>
    <property type="match status" value="1"/>
</dbReference>
<dbReference type="PANTHER" id="PTHR33398:SF1">
    <property type="entry name" value="SMALL RIBOSOMAL SUBUNIT PROTEIN BS20C"/>
    <property type="match status" value="1"/>
</dbReference>
<dbReference type="Pfam" id="PF01649">
    <property type="entry name" value="Ribosomal_S20p"/>
    <property type="match status" value="1"/>
</dbReference>
<dbReference type="SUPFAM" id="SSF46992">
    <property type="entry name" value="Ribosomal protein S20"/>
    <property type="match status" value="1"/>
</dbReference>
<reference key="1">
    <citation type="journal article" date="2005" name="Science">
        <title>Genome sequence of the PCE-dechlorinating bacterium Dehalococcoides ethenogenes.</title>
        <authorList>
            <person name="Seshadri R."/>
            <person name="Adrian L."/>
            <person name="Fouts D.E."/>
            <person name="Eisen J.A."/>
            <person name="Phillippy A.M."/>
            <person name="Methe B.A."/>
            <person name="Ward N.L."/>
            <person name="Nelson W.C."/>
            <person name="DeBoy R.T."/>
            <person name="Khouri H.M."/>
            <person name="Kolonay J.F."/>
            <person name="Dodson R.J."/>
            <person name="Daugherty S.C."/>
            <person name="Brinkac L.M."/>
            <person name="Sullivan S.A."/>
            <person name="Madupu R."/>
            <person name="Nelson K.E."/>
            <person name="Kang K.H."/>
            <person name="Impraim M."/>
            <person name="Tran K."/>
            <person name="Robinson J.M."/>
            <person name="Forberger H.A."/>
            <person name="Fraser C.M."/>
            <person name="Zinder S.H."/>
            <person name="Heidelberg J.F."/>
        </authorList>
    </citation>
    <scope>NUCLEOTIDE SEQUENCE [LARGE SCALE GENOMIC DNA]</scope>
    <source>
        <strain>ATCC BAA-2266 / KCTC 15142 / 195</strain>
    </source>
</reference>
<organism>
    <name type="scientific">Dehalococcoides mccartyi (strain ATCC BAA-2266 / KCTC 15142 / 195)</name>
    <name type="common">Dehalococcoides ethenogenes (strain 195)</name>
    <dbReference type="NCBI Taxonomy" id="243164"/>
    <lineage>
        <taxon>Bacteria</taxon>
        <taxon>Bacillati</taxon>
        <taxon>Chloroflexota</taxon>
        <taxon>Dehalococcoidia</taxon>
        <taxon>Dehalococcoidales</taxon>
        <taxon>Dehalococcoidaceae</taxon>
        <taxon>Dehalococcoides</taxon>
    </lineage>
</organism>
<comment type="function">
    <text evidence="1">Binds directly to 16S ribosomal RNA.</text>
</comment>
<comment type="similarity">
    <text evidence="1">Belongs to the bacterial ribosomal protein bS20 family.</text>
</comment>
<protein>
    <recommendedName>
        <fullName evidence="1">Small ribosomal subunit protein bS20</fullName>
    </recommendedName>
    <alternativeName>
        <fullName evidence="3">30S ribosomal protein S20</fullName>
    </alternativeName>
</protein>
<evidence type="ECO:0000255" key="1">
    <source>
        <dbReference type="HAMAP-Rule" id="MF_00500"/>
    </source>
</evidence>
<evidence type="ECO:0000256" key="2">
    <source>
        <dbReference type="SAM" id="MobiDB-lite"/>
    </source>
</evidence>
<evidence type="ECO:0000305" key="3"/>
<accession>Q3Z617</accession>
<sequence>MPNTKSAEKALRVADANRQENRRAKSQVKTSLTKVKKLVDAGSLTEAEAAAVSAQSTLDKAAEKGILHPKNAARRKSRLMKKLNQAAK</sequence>
<feature type="chain" id="PRO_0000224964" description="Small ribosomal subunit protein bS20">
    <location>
        <begin position="1"/>
        <end position="88"/>
    </location>
</feature>
<feature type="region of interest" description="Disordered" evidence="2">
    <location>
        <begin position="1"/>
        <end position="28"/>
    </location>
</feature>
<feature type="region of interest" description="Disordered" evidence="2">
    <location>
        <begin position="69"/>
        <end position="88"/>
    </location>
</feature>
<feature type="compositionally biased region" description="Basic and acidic residues" evidence="2">
    <location>
        <begin position="1"/>
        <end position="23"/>
    </location>
</feature>
<feature type="compositionally biased region" description="Basic residues" evidence="2">
    <location>
        <begin position="71"/>
        <end position="81"/>
    </location>
</feature>